<organism>
    <name type="scientific">Arabidopsis thaliana</name>
    <name type="common">Mouse-ear cress</name>
    <dbReference type="NCBI Taxonomy" id="3702"/>
    <lineage>
        <taxon>Eukaryota</taxon>
        <taxon>Viridiplantae</taxon>
        <taxon>Streptophyta</taxon>
        <taxon>Embryophyta</taxon>
        <taxon>Tracheophyta</taxon>
        <taxon>Spermatophyta</taxon>
        <taxon>Magnoliopsida</taxon>
        <taxon>eudicotyledons</taxon>
        <taxon>Gunneridae</taxon>
        <taxon>Pentapetalae</taxon>
        <taxon>rosids</taxon>
        <taxon>malvids</taxon>
        <taxon>Brassicales</taxon>
        <taxon>Brassicaceae</taxon>
        <taxon>Camelineae</taxon>
        <taxon>Arabidopsis</taxon>
    </lineage>
</organism>
<name>VATB1_ARATH</name>
<evidence type="ECO:0000250" key="1">
    <source>
        <dbReference type="UniProtKB" id="Q9SZN1"/>
    </source>
</evidence>
<evidence type="ECO:0000305" key="2"/>
<accession>P11574</accession>
<accession>Q42205</accession>
<accession>Q8L584</accession>
<accession>Q9LQR5</accession>
<reference key="1">
    <citation type="journal article" date="1988" name="J. Biol. Chem.">
        <title>cDNA sequence and homologies of the '57-kDa' nucleotide-binding subunit of the vacuolar ATPase from Arabidopsis.</title>
        <authorList>
            <person name="Manolson M.F."/>
            <person name="Ouellette B.F.F."/>
            <person name="Filion M."/>
            <person name="Poole R.J."/>
        </authorList>
    </citation>
    <scope>NUCLEOTIDE SEQUENCE [MRNA]</scope>
</reference>
<reference key="2">
    <citation type="journal article" date="2000" name="Nature">
        <title>Sequence and analysis of chromosome 1 of the plant Arabidopsis thaliana.</title>
        <authorList>
            <person name="Theologis A."/>
            <person name="Ecker J.R."/>
            <person name="Palm C.J."/>
            <person name="Federspiel N.A."/>
            <person name="Kaul S."/>
            <person name="White O."/>
            <person name="Alonso J."/>
            <person name="Altafi H."/>
            <person name="Araujo R."/>
            <person name="Bowman C.L."/>
            <person name="Brooks S.Y."/>
            <person name="Buehler E."/>
            <person name="Chan A."/>
            <person name="Chao Q."/>
            <person name="Chen H."/>
            <person name="Cheuk R.F."/>
            <person name="Chin C.W."/>
            <person name="Chung M.K."/>
            <person name="Conn L."/>
            <person name="Conway A.B."/>
            <person name="Conway A.R."/>
            <person name="Creasy T.H."/>
            <person name="Dewar K."/>
            <person name="Dunn P."/>
            <person name="Etgu P."/>
            <person name="Feldblyum T.V."/>
            <person name="Feng J.-D."/>
            <person name="Fong B."/>
            <person name="Fujii C.Y."/>
            <person name="Gill J.E."/>
            <person name="Goldsmith A.D."/>
            <person name="Haas B."/>
            <person name="Hansen N.F."/>
            <person name="Hughes B."/>
            <person name="Huizar L."/>
            <person name="Hunter J.L."/>
            <person name="Jenkins J."/>
            <person name="Johnson-Hopson C."/>
            <person name="Khan S."/>
            <person name="Khaykin E."/>
            <person name="Kim C.J."/>
            <person name="Koo H.L."/>
            <person name="Kremenetskaia I."/>
            <person name="Kurtz D.B."/>
            <person name="Kwan A."/>
            <person name="Lam B."/>
            <person name="Langin-Hooper S."/>
            <person name="Lee A."/>
            <person name="Lee J.M."/>
            <person name="Lenz C.A."/>
            <person name="Li J.H."/>
            <person name="Li Y.-P."/>
            <person name="Lin X."/>
            <person name="Liu S.X."/>
            <person name="Liu Z.A."/>
            <person name="Luros J.S."/>
            <person name="Maiti R."/>
            <person name="Marziali A."/>
            <person name="Militscher J."/>
            <person name="Miranda M."/>
            <person name="Nguyen M."/>
            <person name="Nierman W.C."/>
            <person name="Osborne B.I."/>
            <person name="Pai G."/>
            <person name="Peterson J."/>
            <person name="Pham P.K."/>
            <person name="Rizzo M."/>
            <person name="Rooney T."/>
            <person name="Rowley D."/>
            <person name="Sakano H."/>
            <person name="Salzberg S.L."/>
            <person name="Schwartz J.R."/>
            <person name="Shinn P."/>
            <person name="Southwick A.M."/>
            <person name="Sun H."/>
            <person name="Tallon L.J."/>
            <person name="Tambunga G."/>
            <person name="Toriumi M.J."/>
            <person name="Town C.D."/>
            <person name="Utterback T."/>
            <person name="Van Aken S."/>
            <person name="Vaysberg M."/>
            <person name="Vysotskaia V.S."/>
            <person name="Walker M."/>
            <person name="Wu D."/>
            <person name="Yu G."/>
            <person name="Fraser C.M."/>
            <person name="Venter J.C."/>
            <person name="Davis R.W."/>
        </authorList>
    </citation>
    <scope>NUCLEOTIDE SEQUENCE [LARGE SCALE GENOMIC DNA]</scope>
    <source>
        <strain>cv. Columbia</strain>
    </source>
</reference>
<reference key="3">
    <citation type="journal article" date="2017" name="Plant J.">
        <title>Araport11: a complete reannotation of the Arabidopsis thaliana reference genome.</title>
        <authorList>
            <person name="Cheng C.Y."/>
            <person name="Krishnakumar V."/>
            <person name="Chan A.P."/>
            <person name="Thibaud-Nissen F."/>
            <person name="Schobel S."/>
            <person name="Town C.D."/>
        </authorList>
    </citation>
    <scope>GENOME REANNOTATION</scope>
    <source>
        <strain>cv. Columbia</strain>
    </source>
</reference>
<reference key="4">
    <citation type="journal article" date="2003" name="Science">
        <title>Empirical analysis of transcriptional activity in the Arabidopsis genome.</title>
        <authorList>
            <person name="Yamada K."/>
            <person name="Lim J."/>
            <person name="Dale J.M."/>
            <person name="Chen H."/>
            <person name="Shinn P."/>
            <person name="Palm C.J."/>
            <person name="Southwick A.M."/>
            <person name="Wu H.C."/>
            <person name="Kim C.J."/>
            <person name="Nguyen M."/>
            <person name="Pham P.K."/>
            <person name="Cheuk R.F."/>
            <person name="Karlin-Newmann G."/>
            <person name="Liu S.X."/>
            <person name="Lam B."/>
            <person name="Sakano H."/>
            <person name="Wu T."/>
            <person name="Yu G."/>
            <person name="Miranda M."/>
            <person name="Quach H.L."/>
            <person name="Tripp M."/>
            <person name="Chang C.H."/>
            <person name="Lee J.M."/>
            <person name="Toriumi M.J."/>
            <person name="Chan M.M."/>
            <person name="Tang C.C."/>
            <person name="Onodera C.S."/>
            <person name="Deng J.M."/>
            <person name="Akiyama K."/>
            <person name="Ansari Y."/>
            <person name="Arakawa T."/>
            <person name="Banh J."/>
            <person name="Banno F."/>
            <person name="Bowser L."/>
            <person name="Brooks S.Y."/>
            <person name="Carninci P."/>
            <person name="Chao Q."/>
            <person name="Choy N."/>
            <person name="Enju A."/>
            <person name="Goldsmith A.D."/>
            <person name="Gurjal M."/>
            <person name="Hansen N.F."/>
            <person name="Hayashizaki Y."/>
            <person name="Johnson-Hopson C."/>
            <person name="Hsuan V.W."/>
            <person name="Iida K."/>
            <person name="Karnes M."/>
            <person name="Khan S."/>
            <person name="Koesema E."/>
            <person name="Ishida J."/>
            <person name="Jiang P.X."/>
            <person name="Jones T."/>
            <person name="Kawai J."/>
            <person name="Kamiya A."/>
            <person name="Meyers C."/>
            <person name="Nakajima M."/>
            <person name="Narusaka M."/>
            <person name="Seki M."/>
            <person name="Sakurai T."/>
            <person name="Satou M."/>
            <person name="Tamse R."/>
            <person name="Vaysberg M."/>
            <person name="Wallender E.K."/>
            <person name="Wong C."/>
            <person name="Yamamura Y."/>
            <person name="Yuan S."/>
            <person name="Shinozaki K."/>
            <person name="Davis R.W."/>
            <person name="Theologis A."/>
            <person name="Ecker J.R."/>
        </authorList>
    </citation>
    <scope>NUCLEOTIDE SEQUENCE [LARGE SCALE MRNA]</scope>
    <source>
        <strain>cv. Columbia</strain>
    </source>
</reference>
<reference key="5">
    <citation type="journal article" date="1996" name="Plant J.">
        <title>Further progress towards a catalogue of all Arabidopsis genes: analysis of a set of 5000 non-redundant ESTs.</title>
        <authorList>
            <person name="Cooke R."/>
            <person name="Raynal M."/>
            <person name="Laudie M."/>
            <person name="Grellet F."/>
            <person name="Delseny M."/>
            <person name="Morris P.-C."/>
            <person name="Guerrier D."/>
            <person name="Giraudat J."/>
            <person name="Quigley F."/>
            <person name="Clabault G."/>
            <person name="Li Y.-F."/>
            <person name="Mache R."/>
            <person name="Krivitzky M."/>
            <person name="Gy I.J.-J."/>
            <person name="Kreis M."/>
            <person name="Lecharny A."/>
            <person name="Parmentier Y."/>
            <person name="Marbach J."/>
            <person name="Fleck J."/>
            <person name="Clement B."/>
            <person name="Philipps G."/>
            <person name="Herve C."/>
            <person name="Bardet C."/>
            <person name="Tremousaygue D."/>
            <person name="Lescure B."/>
            <person name="Lacomme C."/>
            <person name="Roby D."/>
            <person name="Jourjon M.-F."/>
            <person name="Chabrier P."/>
            <person name="Charpenteau J.-L."/>
            <person name="Desprez T."/>
            <person name="Amselem J."/>
            <person name="Chiapello H."/>
            <person name="Hoefte H."/>
        </authorList>
    </citation>
    <scope>NUCLEOTIDE SEQUENCE [LARGE SCALE MRNA] OF 235-334</scope>
    <source>
        <strain>cv. Columbia</strain>
        <tissue>Seedling</tissue>
    </source>
</reference>
<reference key="6">
    <citation type="journal article" date="2002" name="Trends Plant Sci.">
        <title>A simple nomenclature for a complex proton pump: VHA genes encode the vacuolar H(+)-ATPase.</title>
        <authorList>
            <person name="Sze H."/>
            <person name="Schumacher K."/>
            <person name="Mueller M.L."/>
            <person name="Padmanaban S."/>
            <person name="Taiz L."/>
        </authorList>
    </citation>
    <scope>GENE FAMILY</scope>
    <scope>NOMENCLATURE</scope>
</reference>
<feature type="initiator methionine" description="Removed" evidence="1">
    <location>
        <position position="1"/>
    </location>
</feature>
<feature type="chain" id="PRO_0000144639" description="V-type proton ATPase subunit B1">
    <location>
        <begin position="2"/>
        <end position="486"/>
    </location>
</feature>
<feature type="modified residue" description="N-acetylglycine" evidence="1">
    <location>
        <position position="2"/>
    </location>
</feature>
<feature type="sequence conflict" description="In Ref. 5; CAA82390." evidence="2" ref="5">
    <original>R</original>
    <variation>V</variation>
    <location>
        <position position="297"/>
    </location>
</feature>
<proteinExistence type="evidence at transcript level"/>
<gene>
    <name type="primary">VHA-B1</name>
    <name type="synonym">AT57</name>
    <name type="ordered locus">At1g76030</name>
    <name type="ORF">T4O12.24</name>
</gene>
<protein>
    <recommendedName>
        <fullName>V-type proton ATPase subunit B1</fullName>
        <shortName>V-ATPase subunit B1</shortName>
    </recommendedName>
    <alternativeName>
        <fullName>V-ATPase 57 kDa subunit</fullName>
    </alternativeName>
    <alternativeName>
        <fullName>Vacuolar H(+)-ATPase subunit B isoform 1</fullName>
    </alternativeName>
    <alternativeName>
        <fullName>Vacuolar proton pump subunit B1</fullName>
    </alternativeName>
</protein>
<comment type="function">
    <text>Non-catalytic subunit of the peripheral V1 complex of vacuolar ATPase. V-ATPase is responsible for acidifying a variety of intracellular compartments in eukaryotic cells.</text>
</comment>
<comment type="subunit">
    <text>V-ATPase is a heteromultimeric enzyme composed of a peripheral catalytic V1 complex (components A to H) attached to an integral membrane V0 proton pore complex (components: a, c, c'', d and e).</text>
</comment>
<comment type="subcellular location">
    <subcellularLocation>
        <location evidence="2">Vacuole membrane</location>
        <topology evidence="2">Peripheral membrane protein</topology>
    </subcellularLocation>
</comment>
<comment type="similarity">
    <text evidence="2">Belongs to the ATPase alpha/beta chains family.</text>
</comment>
<comment type="sequence caution" evidence="2">
    <conflict type="erroneous initiation">
        <sequence resource="EMBL-CDS" id="AAC36485"/>
    </conflict>
</comment>
<keyword id="KW-0007">Acetylation</keyword>
<keyword id="KW-0375">Hydrogen ion transport</keyword>
<keyword id="KW-0406">Ion transport</keyword>
<keyword id="KW-0472">Membrane</keyword>
<keyword id="KW-1185">Reference proteome</keyword>
<keyword id="KW-0813">Transport</keyword>
<keyword id="KW-0926">Vacuole</keyword>
<sequence>MGTNDLDIEEGTLEIGMEYRTVSGVAGPLVILDKVKGPKYQEIVNIRLGDGSTRRGQVLEVDGEKAVVQVFEGTSGIDNKFTTVQFTGEVLKTPVSLDMLGRIFNGSGKPIDNGPPILPEAYLDISGSSINPSERTYPEEMIQTGISTIDVMNSIARGQKIPLFSAAGLPHNEIAAQICRQAGLVKRLEKTVDLLEDHGEDNFAIVFAAMGVNMETAQFFKRDFEENGSMERVTLFLNLANDPTIERIITPRIALTTAEYLAYECGKHVLVILTDMSSYADALREVSAAREEVPGRRGYPGYMYTDLATIYERAGRIEGRKGSITQIPILTMPNDDITHPTPDLTGYITEGQIYIDRQLHNRQIYPPINVLPSLSRLMKSAIGEGMTRKDHSDVSNQLYANYAIGKDVQAMKAVVGEEALSSEDLLYLEFLDKFERKFVMQGAYDTRNIFQSLDLAWTLLRIFPRELLHRIPAKTLDQFYSRDSTS</sequence>
<dbReference type="EMBL" id="J04185">
    <property type="protein sequence ID" value="AAC36485.1"/>
    <property type="status" value="ALT_INIT"/>
    <property type="molecule type" value="mRNA"/>
</dbReference>
<dbReference type="EMBL" id="AC007396">
    <property type="protein sequence ID" value="AAF26763.1"/>
    <property type="molecule type" value="Genomic_DNA"/>
</dbReference>
<dbReference type="EMBL" id="CP002684">
    <property type="protein sequence ID" value="AEE35786.1"/>
    <property type="molecule type" value="Genomic_DNA"/>
</dbReference>
<dbReference type="EMBL" id="AY094424">
    <property type="protein sequence ID" value="AAM19797.1"/>
    <property type="molecule type" value="mRNA"/>
</dbReference>
<dbReference type="EMBL" id="AY125532">
    <property type="protein sequence ID" value="AAM78042.1"/>
    <property type="molecule type" value="mRNA"/>
</dbReference>
<dbReference type="EMBL" id="Z29126">
    <property type="protein sequence ID" value="CAA82390.1"/>
    <property type="molecule type" value="mRNA"/>
</dbReference>
<dbReference type="PIR" id="A31886">
    <property type="entry name" value="A31886"/>
</dbReference>
<dbReference type="PIR" id="G96788">
    <property type="entry name" value="G96788"/>
</dbReference>
<dbReference type="RefSeq" id="NP_177729.1">
    <property type="nucleotide sequence ID" value="NM_106251.5"/>
</dbReference>
<dbReference type="SMR" id="P11574"/>
<dbReference type="BioGRID" id="29153">
    <property type="interactions" value="13"/>
</dbReference>
<dbReference type="FunCoup" id="P11574">
    <property type="interactions" value="2685"/>
</dbReference>
<dbReference type="IntAct" id="P11574">
    <property type="interactions" value="2"/>
</dbReference>
<dbReference type="STRING" id="3702.P11574"/>
<dbReference type="MoonProt" id="P11574"/>
<dbReference type="TCDB" id="3.A.2.2.5">
    <property type="family name" value="the h+- or na+-translocating f-type, v-type and a-type atpase (f-atpase) superfamily"/>
</dbReference>
<dbReference type="iPTMnet" id="P11574"/>
<dbReference type="PaxDb" id="3702-AT1G76030.1"/>
<dbReference type="ProteomicsDB" id="243222"/>
<dbReference type="EnsemblPlants" id="AT1G76030.1">
    <property type="protein sequence ID" value="AT1G76030.1"/>
    <property type="gene ID" value="AT1G76030"/>
</dbReference>
<dbReference type="GeneID" id="843934"/>
<dbReference type="Gramene" id="AT1G76030.1">
    <property type="protein sequence ID" value="AT1G76030.1"/>
    <property type="gene ID" value="AT1G76030"/>
</dbReference>
<dbReference type="KEGG" id="ath:AT1G76030"/>
<dbReference type="Araport" id="AT1G76030"/>
<dbReference type="TAIR" id="AT1G76030">
    <property type="gene designation" value="VAB1"/>
</dbReference>
<dbReference type="eggNOG" id="KOG1351">
    <property type="taxonomic scope" value="Eukaryota"/>
</dbReference>
<dbReference type="HOGENOM" id="CLU_022916_3_0_1"/>
<dbReference type="InParanoid" id="P11574"/>
<dbReference type="OMA" id="MLIEHSE"/>
<dbReference type="OrthoDB" id="1029686at2759"/>
<dbReference type="PhylomeDB" id="P11574"/>
<dbReference type="BioCyc" id="ARA:AT1G76030-MONOMER"/>
<dbReference type="PRO" id="PR:P11574"/>
<dbReference type="Proteomes" id="UP000006548">
    <property type="component" value="Chromosome 1"/>
</dbReference>
<dbReference type="ExpressionAtlas" id="P11574">
    <property type="expression patterns" value="baseline and differential"/>
</dbReference>
<dbReference type="GO" id="GO:0005794">
    <property type="term" value="C:Golgi apparatus"/>
    <property type="evidence" value="ECO:0007005"/>
    <property type="project" value="TAIR"/>
</dbReference>
<dbReference type="GO" id="GO:0005739">
    <property type="term" value="C:mitochondrion"/>
    <property type="evidence" value="ECO:0007005"/>
    <property type="project" value="TAIR"/>
</dbReference>
<dbReference type="GO" id="GO:0005634">
    <property type="term" value="C:nucleus"/>
    <property type="evidence" value="ECO:0000314"/>
    <property type="project" value="CAFA"/>
</dbReference>
<dbReference type="GO" id="GO:0000325">
    <property type="term" value="C:plant-type vacuole"/>
    <property type="evidence" value="ECO:0007005"/>
    <property type="project" value="TAIR"/>
</dbReference>
<dbReference type="GO" id="GO:0005886">
    <property type="term" value="C:plasma membrane"/>
    <property type="evidence" value="ECO:0007005"/>
    <property type="project" value="TAIR"/>
</dbReference>
<dbReference type="GO" id="GO:0009506">
    <property type="term" value="C:plasmodesma"/>
    <property type="evidence" value="ECO:0007005"/>
    <property type="project" value="TAIR"/>
</dbReference>
<dbReference type="GO" id="GO:0032991">
    <property type="term" value="C:protein-containing complex"/>
    <property type="evidence" value="ECO:0000315"/>
    <property type="project" value="CAFA"/>
</dbReference>
<dbReference type="GO" id="GO:0033180">
    <property type="term" value="C:proton-transporting V-type ATPase, V1 domain"/>
    <property type="evidence" value="ECO:0007669"/>
    <property type="project" value="InterPro"/>
</dbReference>
<dbReference type="GO" id="GO:0005774">
    <property type="term" value="C:vacuolar membrane"/>
    <property type="evidence" value="ECO:0007669"/>
    <property type="project" value="UniProtKB-SubCell"/>
</dbReference>
<dbReference type="GO" id="GO:0005773">
    <property type="term" value="C:vacuole"/>
    <property type="evidence" value="ECO:0007005"/>
    <property type="project" value="TAIR"/>
</dbReference>
<dbReference type="GO" id="GO:0051015">
    <property type="term" value="F:actin filament binding"/>
    <property type="evidence" value="ECO:0000314"/>
    <property type="project" value="TAIR"/>
</dbReference>
<dbReference type="GO" id="GO:0005524">
    <property type="term" value="F:ATP binding"/>
    <property type="evidence" value="ECO:0007669"/>
    <property type="project" value="InterPro"/>
</dbReference>
<dbReference type="GO" id="GO:0046961">
    <property type="term" value="F:proton-transporting ATPase activity, rotational mechanism"/>
    <property type="evidence" value="ECO:0007669"/>
    <property type="project" value="InterPro"/>
</dbReference>
<dbReference type="GO" id="GO:0051017">
    <property type="term" value="P:actin filament bundle assembly"/>
    <property type="evidence" value="ECO:0000314"/>
    <property type="project" value="TAIR"/>
</dbReference>
<dbReference type="GO" id="GO:0051693">
    <property type="term" value="P:actin filament capping"/>
    <property type="evidence" value="ECO:0000314"/>
    <property type="project" value="TAIR"/>
</dbReference>
<dbReference type="GO" id="GO:0046034">
    <property type="term" value="P:ATP metabolic process"/>
    <property type="evidence" value="ECO:0007669"/>
    <property type="project" value="InterPro"/>
</dbReference>
<dbReference type="GO" id="GO:0010255">
    <property type="term" value="P:glucose mediated signaling pathway"/>
    <property type="evidence" value="ECO:0000315"/>
    <property type="project" value="TAIR"/>
</dbReference>
<dbReference type="GO" id="GO:0030835">
    <property type="term" value="P:negative regulation of actin filament depolymerization"/>
    <property type="evidence" value="ECO:0000314"/>
    <property type="project" value="TAIR"/>
</dbReference>
<dbReference type="GO" id="GO:0006357">
    <property type="term" value="P:regulation of transcription by RNA polymerase II"/>
    <property type="evidence" value="ECO:0000315"/>
    <property type="project" value="CAFA"/>
</dbReference>
<dbReference type="CDD" id="cd18112">
    <property type="entry name" value="ATP-synt_V_A-type_beta_C"/>
    <property type="match status" value="1"/>
</dbReference>
<dbReference type="CDD" id="cd18118">
    <property type="entry name" value="ATP-synt_V_A-type_beta_N"/>
    <property type="match status" value="1"/>
</dbReference>
<dbReference type="CDD" id="cd01135">
    <property type="entry name" value="V_A-ATPase_B"/>
    <property type="match status" value="1"/>
</dbReference>
<dbReference type="FunFam" id="3.40.50.12240:FF:000001">
    <property type="entry name" value="V-type proton ATPase subunit B, brain"/>
    <property type="match status" value="1"/>
</dbReference>
<dbReference type="Gene3D" id="3.40.50.12240">
    <property type="match status" value="1"/>
</dbReference>
<dbReference type="HAMAP" id="MF_00310">
    <property type="entry name" value="ATP_synth_B_arch"/>
    <property type="match status" value="1"/>
</dbReference>
<dbReference type="InterPro" id="IPR055190">
    <property type="entry name" value="ATP-synt_VA_C"/>
</dbReference>
<dbReference type="InterPro" id="IPR020003">
    <property type="entry name" value="ATPase_a/bsu_AS"/>
</dbReference>
<dbReference type="InterPro" id="IPR004100">
    <property type="entry name" value="ATPase_F1/V1/A1_a/bsu_N"/>
</dbReference>
<dbReference type="InterPro" id="IPR000194">
    <property type="entry name" value="ATPase_F1/V1/A1_a/bsu_nucl-bd"/>
</dbReference>
<dbReference type="InterPro" id="IPR005723">
    <property type="entry name" value="ATPase_V1-cplx_bsu"/>
</dbReference>
<dbReference type="InterPro" id="IPR027417">
    <property type="entry name" value="P-loop_NTPase"/>
</dbReference>
<dbReference type="InterPro" id="IPR022879">
    <property type="entry name" value="V-ATPase_su_B/beta"/>
</dbReference>
<dbReference type="NCBIfam" id="NF003235">
    <property type="entry name" value="PRK04196.1"/>
    <property type="match status" value="1"/>
</dbReference>
<dbReference type="NCBIfam" id="TIGR01040">
    <property type="entry name" value="V-ATPase_V1_B"/>
    <property type="match status" value="1"/>
</dbReference>
<dbReference type="PANTHER" id="PTHR43389">
    <property type="entry name" value="V-TYPE PROTON ATPASE SUBUNIT B"/>
    <property type="match status" value="1"/>
</dbReference>
<dbReference type="PANTHER" id="PTHR43389:SF27">
    <property type="entry name" value="V-TYPE PROTON ATPASE SUBUNIT B1-RELATED"/>
    <property type="match status" value="1"/>
</dbReference>
<dbReference type="Pfam" id="PF00006">
    <property type="entry name" value="ATP-synt_ab"/>
    <property type="match status" value="1"/>
</dbReference>
<dbReference type="Pfam" id="PF02874">
    <property type="entry name" value="ATP-synt_ab_N"/>
    <property type="match status" value="1"/>
</dbReference>
<dbReference type="Pfam" id="PF22919">
    <property type="entry name" value="ATP-synt_VA_C"/>
    <property type="match status" value="1"/>
</dbReference>
<dbReference type="PIRSF" id="PIRSF039114">
    <property type="entry name" value="V-ATPsynth_beta/V-ATPase_B"/>
    <property type="match status" value="1"/>
</dbReference>
<dbReference type="SUPFAM" id="SSF52540">
    <property type="entry name" value="P-loop containing nucleoside triphosphate hydrolases"/>
    <property type="match status" value="1"/>
</dbReference>
<dbReference type="PROSITE" id="PS00152">
    <property type="entry name" value="ATPASE_ALPHA_BETA"/>
    <property type="match status" value="1"/>
</dbReference>